<feature type="chain" id="PRO_0000444209" description="dTDP-glucose 4,6-dehydratase">
    <location>
        <begin position="1"/>
        <end position="335"/>
    </location>
</feature>
<feature type="active site" description="Proton donor" evidence="2">
    <location>
        <position position="126"/>
    </location>
</feature>
<feature type="active site" description="Proton acceptor" evidence="2">
    <location>
        <position position="127"/>
    </location>
</feature>
<feature type="active site" description="Proton acceptor" evidence="2">
    <location>
        <position position="149"/>
    </location>
</feature>
<feature type="binding site" evidence="2">
    <location>
        <begin position="11"/>
        <end position="12"/>
    </location>
    <ligand>
        <name>NAD(+)</name>
        <dbReference type="ChEBI" id="CHEBI:57540"/>
    </ligand>
</feature>
<feature type="binding site" evidence="2">
    <location>
        <begin position="38"/>
        <end position="41"/>
    </location>
    <ligand>
        <name>NAD(+)</name>
        <dbReference type="ChEBI" id="CHEBI:57540"/>
    </ligand>
</feature>
<feature type="binding site" evidence="2">
    <location>
        <begin position="61"/>
        <end position="62"/>
    </location>
    <ligand>
        <name>NAD(+)</name>
        <dbReference type="ChEBI" id="CHEBI:57540"/>
    </ligand>
</feature>
<feature type="binding site" evidence="2">
    <location>
        <begin position="81"/>
        <end position="85"/>
    </location>
    <ligand>
        <name>NAD(+)</name>
        <dbReference type="ChEBI" id="CHEBI:57540"/>
    </ligand>
</feature>
<feature type="binding site" evidence="1">
    <location>
        <position position="85"/>
    </location>
    <ligand>
        <name>substrate</name>
    </ligand>
</feature>
<feature type="binding site" evidence="2">
    <location>
        <position position="100"/>
    </location>
    <ligand>
        <name>NAD(+)</name>
        <dbReference type="ChEBI" id="CHEBI:57540"/>
    </ligand>
</feature>
<feature type="binding site" evidence="1">
    <location>
        <position position="125"/>
    </location>
    <ligand>
        <name>substrate</name>
    </ligand>
</feature>
<feature type="binding site" evidence="2">
    <location>
        <begin position="149"/>
        <end position="153"/>
    </location>
    <ligand>
        <name>NAD(+)</name>
        <dbReference type="ChEBI" id="CHEBI:57540"/>
    </ligand>
</feature>
<feature type="binding site" evidence="1">
    <location>
        <position position="178"/>
    </location>
    <ligand>
        <name>substrate</name>
    </ligand>
</feature>
<feature type="binding site" evidence="2">
    <location>
        <position position="179"/>
    </location>
    <ligand>
        <name>NAD(+)</name>
        <dbReference type="ChEBI" id="CHEBI:57540"/>
    </ligand>
</feature>
<feature type="binding site" evidence="1">
    <location>
        <begin position="188"/>
        <end position="189"/>
    </location>
    <ligand>
        <name>substrate</name>
    </ligand>
</feature>
<feature type="binding site" evidence="1">
    <location>
        <begin position="204"/>
        <end position="206"/>
    </location>
    <ligand>
        <name>substrate</name>
    </ligand>
</feature>
<feature type="binding site" evidence="1">
    <location>
        <position position="213"/>
    </location>
    <ligand>
        <name>substrate</name>
    </ligand>
</feature>
<feature type="binding site" evidence="1">
    <location>
        <position position="248"/>
    </location>
    <ligand>
        <name>substrate</name>
    </ligand>
</feature>
<feature type="binding site" evidence="1">
    <location>
        <begin position="271"/>
        <end position="275"/>
    </location>
    <ligand>
        <name>substrate</name>
    </ligand>
</feature>
<gene>
    <name evidence="4" type="primary">oleE</name>
</gene>
<sequence>MNLLVTGAAGFIGSRYVHHLLEATRRGREPAPVITVLDKLTYAGVLGNVPDDPAVTFVRGDIADAPLVDSLMAEADQVVHFAAETHVDRSITSPGTFVRTNVLGTQVLLDAALRHGVGPFVHVSTDEVYGSIEHGSWPEHQPLCPNSPYSASKASSDLLALSYHRTHGLDVRVTRCSNNYGPHQFPEKIVPLFVTNLLDGLRVPLYGDGLNVREWLHVDDHCLGVDLVRTQGRPGEVYHIGGGTELTNRDLTGLLLDAFGVGWDVVDPVADRKGHDRRYALDCAKAADELGYRPRRDFAEGIARTIDWYRDNRAWWEPLKKRPAGPAAPPRGSGP</sequence>
<organism evidence="7">
    <name type="scientific">Streptomyces antibioticus</name>
    <dbReference type="NCBI Taxonomy" id="1890"/>
    <lineage>
        <taxon>Bacteria</taxon>
        <taxon>Bacillati</taxon>
        <taxon>Actinomycetota</taxon>
        <taxon>Actinomycetes</taxon>
        <taxon>Kitasatosporales</taxon>
        <taxon>Streptomycetaceae</taxon>
        <taxon>Streptomyces</taxon>
    </lineage>
</organism>
<accession>Q9RR28</accession>
<name>OLEE_STRAT</name>
<comment type="function">
    <text evidence="2 3">Involved in the biosynthesis of the two 2,6-deoxysugars, dTDP-L-oleandrose and dTDP-D-desosamine, attached to the macrolactone ring oleandolide to produce the aglycone antibiotic oleandomycin (PubMed:10770761). Catalyzes the dehydration of dTDP-D-glucose to form dTDP-6-deoxy-D-xylo-4-hexulose via a three-step process involving oxidation, dehydration and reduction (By similarity).</text>
</comment>
<comment type="catalytic activity">
    <reaction evidence="2">
        <text>dTDP-alpha-D-glucose = dTDP-4-dehydro-6-deoxy-alpha-D-glucose + H2O</text>
        <dbReference type="Rhea" id="RHEA:17221"/>
        <dbReference type="ChEBI" id="CHEBI:15377"/>
        <dbReference type="ChEBI" id="CHEBI:57477"/>
        <dbReference type="ChEBI" id="CHEBI:57649"/>
        <dbReference type="EC" id="4.2.1.46"/>
    </reaction>
</comment>
<comment type="cofactor">
    <cofactor evidence="2">
        <name>NAD(+)</name>
        <dbReference type="ChEBI" id="CHEBI:57540"/>
    </cofactor>
    <text evidence="2">Binds 1 NAD(+) per subunit.</text>
</comment>
<comment type="pathway">
    <text evidence="6">Antibiotic biosynthesis.</text>
</comment>
<comment type="similarity">
    <text evidence="5">Belongs to the NAD(P)-dependent epimerase/dehydratase family. dTDP-glucose dehydratase subfamily.</text>
</comment>
<reference key="1">
    <citation type="journal article" date="2000" name="Antimicrob. Agents Chemother.">
        <title>Identification and expression of genes involved in biosynthesis of L-oleandrose and its intermediate L-olivose in the oleandomycin producer Streptomyces antibioticus.</title>
        <authorList>
            <person name="Aguirrezabalaga I."/>
            <person name="Olano C."/>
            <person name="Allende N."/>
            <person name="Rodriguez L."/>
            <person name="Brana A.F."/>
            <person name="Mendez C."/>
            <person name="Salas J.A."/>
        </authorList>
    </citation>
    <scope>NUCLEOTIDE SEQUENCE [GENOMIC DNA]</scope>
    <scope>FUNCTION</scope>
    <scope>PATHWAY</scope>
    <source>
        <strain evidence="7">ATCC 11891 / DSM 40868 / BCRC 11580 / NCIMB 11506 / PSA 205</strain>
    </source>
</reference>
<keyword id="KW-0045">Antibiotic biosynthesis</keyword>
<keyword id="KW-0456">Lyase</keyword>
<keyword id="KW-0520">NAD</keyword>
<proteinExistence type="inferred from homology"/>
<evidence type="ECO:0000250" key="1">
    <source>
        <dbReference type="UniProtKB" id="P26391"/>
    </source>
</evidence>
<evidence type="ECO:0000250" key="2">
    <source>
        <dbReference type="UniProtKB" id="P27830"/>
    </source>
</evidence>
<evidence type="ECO:0000269" key="3">
    <source>
    </source>
</evidence>
<evidence type="ECO:0000303" key="4">
    <source>
    </source>
</evidence>
<evidence type="ECO:0000305" key="5"/>
<evidence type="ECO:0000305" key="6">
    <source>
    </source>
</evidence>
<evidence type="ECO:0000312" key="7">
    <source>
        <dbReference type="EMBL" id="AAD55454.1"/>
    </source>
</evidence>
<protein>
    <recommendedName>
        <fullName evidence="4">dTDP-glucose 4,6-dehydratase</fullName>
        <ecNumber evidence="2">4.2.1.46</ecNumber>
    </recommendedName>
</protein>
<dbReference type="EC" id="4.2.1.46" evidence="2"/>
<dbReference type="EMBL" id="AF055579">
    <property type="protein sequence ID" value="AAD55454.1"/>
    <property type="molecule type" value="Genomic_DNA"/>
</dbReference>
<dbReference type="PIR" id="T51106">
    <property type="entry name" value="T51106"/>
</dbReference>
<dbReference type="SMR" id="Q9RR28"/>
<dbReference type="STRING" id="1890.AFM16_33755"/>
<dbReference type="BioCyc" id="MetaCyc:MONOMER-17068"/>
<dbReference type="GO" id="GO:0008460">
    <property type="term" value="F:dTDP-glucose 4,6-dehydratase activity"/>
    <property type="evidence" value="ECO:0007669"/>
    <property type="project" value="UniProtKB-EC"/>
</dbReference>
<dbReference type="GO" id="GO:0016491">
    <property type="term" value="F:oxidoreductase activity"/>
    <property type="evidence" value="ECO:0007669"/>
    <property type="project" value="InterPro"/>
</dbReference>
<dbReference type="GO" id="GO:0017000">
    <property type="term" value="P:antibiotic biosynthetic process"/>
    <property type="evidence" value="ECO:0007669"/>
    <property type="project" value="UniProtKB-KW"/>
</dbReference>
<dbReference type="GO" id="GO:0009225">
    <property type="term" value="P:nucleotide-sugar metabolic process"/>
    <property type="evidence" value="ECO:0007669"/>
    <property type="project" value="InterPro"/>
</dbReference>
<dbReference type="CDD" id="cd05246">
    <property type="entry name" value="dTDP_GD_SDR_e"/>
    <property type="match status" value="1"/>
</dbReference>
<dbReference type="Gene3D" id="3.40.50.720">
    <property type="entry name" value="NAD(P)-binding Rossmann-like Domain"/>
    <property type="match status" value="1"/>
</dbReference>
<dbReference type="Gene3D" id="3.90.25.10">
    <property type="entry name" value="UDP-galactose 4-epimerase, domain 1"/>
    <property type="match status" value="1"/>
</dbReference>
<dbReference type="InterPro" id="IPR005888">
    <property type="entry name" value="dTDP_Gluc_deHydtase"/>
</dbReference>
<dbReference type="InterPro" id="IPR016040">
    <property type="entry name" value="NAD(P)-bd_dom"/>
</dbReference>
<dbReference type="InterPro" id="IPR036291">
    <property type="entry name" value="NAD(P)-bd_dom_sf"/>
</dbReference>
<dbReference type="InterPro" id="IPR020904">
    <property type="entry name" value="Sc_DH/Rdtase_CS"/>
</dbReference>
<dbReference type="NCBIfam" id="TIGR01181">
    <property type="entry name" value="dTDP_gluc_dehyt"/>
    <property type="match status" value="1"/>
</dbReference>
<dbReference type="PANTHER" id="PTHR43000">
    <property type="entry name" value="DTDP-D-GLUCOSE 4,6-DEHYDRATASE-RELATED"/>
    <property type="match status" value="1"/>
</dbReference>
<dbReference type="Pfam" id="PF16363">
    <property type="entry name" value="GDP_Man_Dehyd"/>
    <property type="match status" value="1"/>
</dbReference>
<dbReference type="SUPFAM" id="SSF51735">
    <property type="entry name" value="NAD(P)-binding Rossmann-fold domains"/>
    <property type="match status" value="1"/>
</dbReference>
<dbReference type="PROSITE" id="PS00061">
    <property type="entry name" value="ADH_SHORT"/>
    <property type="match status" value="1"/>
</dbReference>